<proteinExistence type="inferred from homology"/>
<dbReference type="EC" id="4.1.1.1"/>
<dbReference type="EMBL" id="U00967">
    <property type="protein sequence ID" value="AAA20440.1"/>
    <property type="molecule type" value="Genomic_DNA"/>
</dbReference>
<dbReference type="SMR" id="P51844"/>
<dbReference type="VEuPathDB" id="FungiDB:BDV34DRAFT_232269"/>
<dbReference type="GO" id="GO:0005829">
    <property type="term" value="C:cytosol"/>
    <property type="evidence" value="ECO:0007669"/>
    <property type="project" value="TreeGrafter"/>
</dbReference>
<dbReference type="GO" id="GO:0005634">
    <property type="term" value="C:nucleus"/>
    <property type="evidence" value="ECO:0007669"/>
    <property type="project" value="TreeGrafter"/>
</dbReference>
<dbReference type="GO" id="GO:0000287">
    <property type="term" value="F:magnesium ion binding"/>
    <property type="evidence" value="ECO:0007669"/>
    <property type="project" value="InterPro"/>
</dbReference>
<dbReference type="GO" id="GO:0004737">
    <property type="term" value="F:pyruvate decarboxylase activity"/>
    <property type="evidence" value="ECO:0007669"/>
    <property type="project" value="UniProtKB-EC"/>
</dbReference>
<dbReference type="GO" id="GO:0030976">
    <property type="term" value="F:thiamine pyrophosphate binding"/>
    <property type="evidence" value="ECO:0007669"/>
    <property type="project" value="InterPro"/>
</dbReference>
<dbReference type="GO" id="GO:0000949">
    <property type="term" value="P:aromatic amino acid family catabolic process to alcohol via Ehrlich pathway"/>
    <property type="evidence" value="ECO:0007669"/>
    <property type="project" value="TreeGrafter"/>
</dbReference>
<dbReference type="CDD" id="cd02005">
    <property type="entry name" value="TPP_PDC_IPDC"/>
    <property type="match status" value="1"/>
</dbReference>
<dbReference type="CDD" id="cd07038">
    <property type="entry name" value="TPP_PYR_PDC_IPDC_like"/>
    <property type="match status" value="1"/>
</dbReference>
<dbReference type="FunFam" id="3.40.50.970:FF:000019">
    <property type="entry name" value="Pyruvate decarboxylase isozyme"/>
    <property type="match status" value="1"/>
</dbReference>
<dbReference type="FunFam" id="3.40.50.970:FF:000024">
    <property type="entry name" value="Pyruvate decarboxylase isozyme"/>
    <property type="match status" value="1"/>
</dbReference>
<dbReference type="Gene3D" id="3.40.50.970">
    <property type="match status" value="2"/>
</dbReference>
<dbReference type="Gene3D" id="3.40.50.1220">
    <property type="entry name" value="TPP-binding domain"/>
    <property type="match status" value="1"/>
</dbReference>
<dbReference type="InterPro" id="IPR029035">
    <property type="entry name" value="DHS-like_NAD/FAD-binding_dom"/>
</dbReference>
<dbReference type="InterPro" id="IPR012110">
    <property type="entry name" value="PDC/IPDC-like"/>
</dbReference>
<dbReference type="InterPro" id="IPR029061">
    <property type="entry name" value="THDP-binding"/>
</dbReference>
<dbReference type="InterPro" id="IPR012000">
    <property type="entry name" value="Thiamin_PyroP_enz_cen_dom"/>
</dbReference>
<dbReference type="InterPro" id="IPR012001">
    <property type="entry name" value="Thiamin_PyroP_enz_TPP-bd_dom"/>
</dbReference>
<dbReference type="InterPro" id="IPR011766">
    <property type="entry name" value="TPP_enzyme_TPP-bd"/>
</dbReference>
<dbReference type="InterPro" id="IPR047214">
    <property type="entry name" value="TPP_PDC_IPDC"/>
</dbReference>
<dbReference type="InterPro" id="IPR047213">
    <property type="entry name" value="TPP_PYR_PDC_IPDC-like"/>
</dbReference>
<dbReference type="PANTHER" id="PTHR43452">
    <property type="entry name" value="PYRUVATE DECARBOXYLASE"/>
    <property type="match status" value="1"/>
</dbReference>
<dbReference type="PANTHER" id="PTHR43452:SF11">
    <property type="entry name" value="PYRUVATE DECARBOXYLASE"/>
    <property type="match status" value="1"/>
</dbReference>
<dbReference type="Pfam" id="PF02775">
    <property type="entry name" value="TPP_enzyme_C"/>
    <property type="match status" value="1"/>
</dbReference>
<dbReference type="Pfam" id="PF00205">
    <property type="entry name" value="TPP_enzyme_M"/>
    <property type="match status" value="1"/>
</dbReference>
<dbReference type="Pfam" id="PF02776">
    <property type="entry name" value="TPP_enzyme_N"/>
    <property type="match status" value="1"/>
</dbReference>
<dbReference type="PIRSF" id="PIRSF036565">
    <property type="entry name" value="Pyruvt_ip_decrb"/>
    <property type="match status" value="1"/>
</dbReference>
<dbReference type="SUPFAM" id="SSF52467">
    <property type="entry name" value="DHS-like NAD/FAD-binding domain"/>
    <property type="match status" value="1"/>
</dbReference>
<dbReference type="SUPFAM" id="SSF52518">
    <property type="entry name" value="Thiamin diphosphate-binding fold (THDP-binding)"/>
    <property type="match status" value="2"/>
</dbReference>
<name>PDC_ASPPA</name>
<evidence type="ECO:0000250" key="1"/>
<evidence type="ECO:0000305" key="2"/>
<gene>
    <name type="primary">pdcA</name>
    <name type="synonym">pdc</name>
</gene>
<comment type="catalytic activity">
    <reaction>
        <text>a 2-oxocarboxylate + H(+) = an aldehyde + CO2</text>
        <dbReference type="Rhea" id="RHEA:11628"/>
        <dbReference type="ChEBI" id="CHEBI:15378"/>
        <dbReference type="ChEBI" id="CHEBI:16526"/>
        <dbReference type="ChEBI" id="CHEBI:17478"/>
        <dbReference type="ChEBI" id="CHEBI:35179"/>
        <dbReference type="EC" id="4.1.1.1"/>
    </reaction>
</comment>
<comment type="cofactor">
    <cofactor evidence="1">
        <name>a metal cation</name>
        <dbReference type="ChEBI" id="CHEBI:25213"/>
    </cofactor>
    <text evidence="1">Binds 1 metal ion per subunit.</text>
</comment>
<comment type="cofactor">
    <cofactor evidence="1">
        <name>thiamine diphosphate</name>
        <dbReference type="ChEBI" id="CHEBI:58937"/>
    </cofactor>
    <text evidence="1">Binds 1 thiamine pyrophosphate per subunit.</text>
</comment>
<comment type="subunit">
    <text evidence="1">Homotetramer.</text>
</comment>
<comment type="similarity">
    <text evidence="2">Belongs to the TPP enzyme family.</text>
</comment>
<feature type="chain" id="PRO_0000090760" description="Pyruvate decarboxylase">
    <location>
        <begin position="1"/>
        <end position="577"/>
    </location>
</feature>
<feature type="region of interest" description="Thiamine pyrophosphate binding">
    <location>
        <begin position="388"/>
        <end position="482"/>
    </location>
</feature>
<feature type="binding site" evidence="1">
    <location>
        <position position="30"/>
    </location>
    <ligand>
        <name>substrate</name>
    </ligand>
</feature>
<feature type="binding site" evidence="1">
    <location>
        <position position="116"/>
    </location>
    <ligand>
        <name>substrate</name>
    </ligand>
</feature>
<feature type="binding site" evidence="1">
    <location>
        <position position="450"/>
    </location>
    <ligand>
        <name>Mg(2+)</name>
        <dbReference type="ChEBI" id="CHEBI:18420"/>
    </ligand>
</feature>
<feature type="binding site" evidence="1">
    <location>
        <position position="477"/>
    </location>
    <ligand>
        <name>Mg(2+)</name>
        <dbReference type="ChEBI" id="CHEBI:18420"/>
    </ligand>
</feature>
<feature type="binding site" evidence="1">
    <location>
        <position position="479"/>
    </location>
    <ligand>
        <name>Mg(2+)</name>
        <dbReference type="ChEBI" id="CHEBI:18420"/>
    </ligand>
</feature>
<feature type="binding site" evidence="1">
    <location>
        <position position="483"/>
    </location>
    <ligand>
        <name>substrate</name>
    </ligand>
</feature>
<keyword id="KW-0210">Decarboxylase</keyword>
<keyword id="KW-0456">Lyase</keyword>
<keyword id="KW-0460">Magnesium</keyword>
<keyword id="KW-0479">Metal-binding</keyword>
<keyword id="KW-0786">Thiamine pyrophosphate</keyword>
<sequence length="577" mass="64071">MEGETLPLAQYLFKRLLQLGVDSIFGVPGDYNLTLLDHVVPSGLKWVGNCNELNAGYAADGYSRIKDIGAVVTTFGVGELSAINAIAGAYAEKAPVVHIVGTPMRASQESRALIHHTFNDGDYQRFDAIQEHVTVAQVSLSDHRTAPSEIDRILLQCLLHSRPVRIAIPVDMVPVLVPVAGLSSKIQIPPAVRQPQAEEAALNAVLKRIYSSKKPMILVDGETRSFGMLQRVNHFIQTIGWPTFTSGFGKGLVDETLPNVYGVCTLHQKAFVDSCDLVLVFGPHFSNTNSYNYFLKPADEKSVLFSPNSIQVNKDVFRDLPVGYFIEQLTQQLDISRIPTHKHDLVHPSLRTLPEVSPTDLVTQTGGFWKRFSPFLRTGDIILGETGTPGYGVNDFILPPQTRLFKPATWLSIGYMLPAALGASHAQRDLVASDQYHSLSNPRTILFIGDGSFQMTVQELSTIIHQKLNVIIFLINNDGYTIERCIHGRNQAYNDVAPWRYLKAAEFFGADQDGEYKASTWEVRTWADLDRVLNDSQLADGKGLRMVEVFMERLDAPDVLMGLLNNQVLRENAQSRL</sequence>
<organism>
    <name type="scientific">Aspergillus parasiticus</name>
    <dbReference type="NCBI Taxonomy" id="5067"/>
    <lineage>
        <taxon>Eukaryota</taxon>
        <taxon>Fungi</taxon>
        <taxon>Dikarya</taxon>
        <taxon>Ascomycota</taxon>
        <taxon>Pezizomycotina</taxon>
        <taxon>Eurotiomycetes</taxon>
        <taxon>Eurotiomycetidae</taxon>
        <taxon>Eurotiales</taxon>
        <taxon>Aspergillaceae</taxon>
        <taxon>Aspergillus</taxon>
        <taxon>Aspergillus subgen. Circumdati</taxon>
    </lineage>
</organism>
<accession>P51844</accession>
<reference key="1">
    <citation type="journal article" date="1994" name="FEMS Microbiol. Lett.">
        <title>A pyruvate decarboxylase gene from Aspergillus parasiticus.</title>
        <authorList>
            <person name="Sanchis V."/>
            <person name="Vinas I."/>
            <person name="Roberts I.N."/>
            <person name="Jeenes D.J."/>
            <person name="Watson A.J."/>
            <person name="Archer D.B."/>
        </authorList>
    </citation>
    <scope>NUCLEOTIDE SEQUENCE [GENOMIC DNA]</scope>
    <source>
        <strain>ATCC 56775 / NRRL 5862 / Su-1 / SRRC 143</strain>
    </source>
</reference>
<protein>
    <recommendedName>
        <fullName>Pyruvate decarboxylase</fullName>
        <ecNumber>4.1.1.1</ecNumber>
    </recommendedName>
</protein>